<name>Y1658_PYRIL</name>
<evidence type="ECO:0000255" key="1">
    <source>
        <dbReference type="HAMAP-Rule" id="MF_01112"/>
    </source>
</evidence>
<reference key="1">
    <citation type="submission" date="2006-12" db="EMBL/GenBank/DDBJ databases">
        <title>Complete sequence of Pyrobaculum islandicum DSM 4184.</title>
        <authorList>
            <person name="Copeland A."/>
            <person name="Lucas S."/>
            <person name="Lapidus A."/>
            <person name="Barry K."/>
            <person name="Detter J.C."/>
            <person name="Glavina del Rio T."/>
            <person name="Dalin E."/>
            <person name="Tice H."/>
            <person name="Pitluck S."/>
            <person name="Meincke L."/>
            <person name="Brettin T."/>
            <person name="Bruce D."/>
            <person name="Han C."/>
            <person name="Tapia R."/>
            <person name="Gilna P."/>
            <person name="Schmutz J."/>
            <person name="Larimer F."/>
            <person name="Land M."/>
            <person name="Hauser L."/>
            <person name="Kyrpides N."/>
            <person name="Mikhailova N."/>
            <person name="Cozen A.E."/>
            <person name="Fitz-Gibbon S.T."/>
            <person name="House C.H."/>
            <person name="Saltikov C."/>
            <person name="Lowe T."/>
            <person name="Richardson P."/>
        </authorList>
    </citation>
    <scope>NUCLEOTIDE SEQUENCE [LARGE SCALE GENOMIC DNA]</scope>
    <source>
        <strain>DSM 4184 / JCM 9189 / GEO3</strain>
    </source>
</reference>
<accession>A1RV28</accession>
<comment type="similarity">
    <text evidence="1">Belongs to the UPF0201 family.</text>
</comment>
<protein>
    <recommendedName>
        <fullName evidence="1">UPF0201 protein Pisl_1658</fullName>
    </recommendedName>
</protein>
<gene>
    <name type="ordered locus">Pisl_1658</name>
</gene>
<dbReference type="EMBL" id="CP000504">
    <property type="protein sequence ID" value="ABL88810.1"/>
    <property type="molecule type" value="Genomic_DNA"/>
</dbReference>
<dbReference type="RefSeq" id="WP_011763385.1">
    <property type="nucleotide sequence ID" value="NC_008701.1"/>
</dbReference>
<dbReference type="SMR" id="A1RV28"/>
<dbReference type="STRING" id="384616.Pisl_1658"/>
<dbReference type="GeneID" id="4618326"/>
<dbReference type="KEGG" id="pis:Pisl_1658"/>
<dbReference type="eggNOG" id="arCOG01043">
    <property type="taxonomic scope" value="Archaea"/>
</dbReference>
<dbReference type="HOGENOM" id="CLU_134829_1_0_2"/>
<dbReference type="OrthoDB" id="7819at2157"/>
<dbReference type="Proteomes" id="UP000002595">
    <property type="component" value="Chromosome"/>
</dbReference>
<dbReference type="Gene3D" id="3.30.1440.10">
    <property type="match status" value="1"/>
</dbReference>
<dbReference type="HAMAP" id="MF_01112">
    <property type="entry name" value="UPF0201"/>
    <property type="match status" value="1"/>
</dbReference>
<dbReference type="InterPro" id="IPR002739">
    <property type="entry name" value="PAB1135-like"/>
</dbReference>
<dbReference type="InterPro" id="IPR022803">
    <property type="entry name" value="Ribosomal_uL5_dom_sf"/>
</dbReference>
<dbReference type="PANTHER" id="PTHR39652">
    <property type="entry name" value="UPF0201 PROTEIN TK1335"/>
    <property type="match status" value="1"/>
</dbReference>
<dbReference type="PANTHER" id="PTHR39652:SF1">
    <property type="entry name" value="UPF0201 PROTEIN TK1335"/>
    <property type="match status" value="1"/>
</dbReference>
<dbReference type="Pfam" id="PF01877">
    <property type="entry name" value="RNA_binding"/>
    <property type="match status" value="1"/>
</dbReference>
<dbReference type="SUPFAM" id="SSF55282">
    <property type="entry name" value="RL5-like"/>
    <property type="match status" value="1"/>
</dbReference>
<organism>
    <name type="scientific">Pyrobaculum islandicum (strain DSM 4184 / JCM 9189 / GEO3)</name>
    <dbReference type="NCBI Taxonomy" id="384616"/>
    <lineage>
        <taxon>Archaea</taxon>
        <taxon>Thermoproteota</taxon>
        <taxon>Thermoprotei</taxon>
        <taxon>Thermoproteales</taxon>
        <taxon>Thermoproteaceae</taxon>
        <taxon>Pyrobaculum</taxon>
    </lineage>
</organism>
<sequence length="143" mass="15996">MRIEAVVEVRFTEDRGKVLKALQNVFTPVSIEEKPSESGVLIVATCEGYTCLEKLRSAIWRQGIQDAARNVISKGIVSENTIIFSVNKQAAYVGVVSFVTETNESPLGPITFTVKTNNVRQFLDWLAPRTYRGRVYYEAPPPD</sequence>
<proteinExistence type="inferred from homology"/>
<feature type="chain" id="PRO_1000065155" description="UPF0201 protein Pisl_1658">
    <location>
        <begin position="1"/>
        <end position="143"/>
    </location>
</feature>